<sequence>MHEQLSPRDQELEARLVELETRLSFQEQALTELSEALADARLTGARNAELIRHLLEDLGKVRSTLFADAADEPPPPHY</sequence>
<feature type="chain" id="PRO_0000209221" description="Protein SlyX homolog">
    <location>
        <begin position="1"/>
        <end position="78"/>
    </location>
</feature>
<feature type="helix" evidence="2">
    <location>
        <begin position="11"/>
        <end position="56"/>
    </location>
</feature>
<gene>
    <name evidence="1" type="primary">slyX</name>
    <name type="ordered locus">XCC1504</name>
</gene>
<protein>
    <recommendedName>
        <fullName evidence="1">Protein SlyX homolog</fullName>
    </recommendedName>
</protein>
<dbReference type="EMBL" id="AE008922">
    <property type="protein sequence ID" value="AAM40800.1"/>
    <property type="molecule type" value="Genomic_DNA"/>
</dbReference>
<dbReference type="RefSeq" id="NP_636876.1">
    <property type="nucleotide sequence ID" value="NC_003902.1"/>
</dbReference>
<dbReference type="RefSeq" id="WP_011036690.1">
    <property type="nucleotide sequence ID" value="NC_003902.1"/>
</dbReference>
<dbReference type="PDB" id="3EFG">
    <property type="method" value="X-ray"/>
    <property type="resolution" value="2.00 A"/>
    <property type="chains" value="A=1-78"/>
</dbReference>
<dbReference type="PDBsum" id="3EFG"/>
<dbReference type="SMR" id="Q8PAH9"/>
<dbReference type="STRING" id="190485.XCC1504"/>
<dbReference type="DNASU" id="1001927"/>
<dbReference type="EnsemblBacteria" id="AAM40800">
    <property type="protein sequence ID" value="AAM40800"/>
    <property type="gene ID" value="XCC1504"/>
</dbReference>
<dbReference type="KEGG" id="xcc:XCC1504"/>
<dbReference type="PATRIC" id="fig|190485.4.peg.1612"/>
<dbReference type="eggNOG" id="COG2900">
    <property type="taxonomic scope" value="Bacteria"/>
</dbReference>
<dbReference type="HOGENOM" id="CLU_180796_4_2_6"/>
<dbReference type="OrthoDB" id="5998734at2"/>
<dbReference type="EvolutionaryTrace" id="Q8PAH9"/>
<dbReference type="Proteomes" id="UP000001010">
    <property type="component" value="Chromosome"/>
</dbReference>
<dbReference type="Gene3D" id="1.20.5.300">
    <property type="match status" value="1"/>
</dbReference>
<dbReference type="HAMAP" id="MF_00715">
    <property type="entry name" value="SlyX"/>
    <property type="match status" value="1"/>
</dbReference>
<dbReference type="InterPro" id="IPR007236">
    <property type="entry name" value="SlyX"/>
</dbReference>
<dbReference type="NCBIfam" id="NF002024">
    <property type="entry name" value="PRK00846.1"/>
    <property type="match status" value="1"/>
</dbReference>
<dbReference type="PANTHER" id="PTHR36508">
    <property type="entry name" value="PROTEIN SLYX"/>
    <property type="match status" value="1"/>
</dbReference>
<dbReference type="PANTHER" id="PTHR36508:SF1">
    <property type="entry name" value="PROTEIN SLYX"/>
    <property type="match status" value="1"/>
</dbReference>
<dbReference type="Pfam" id="PF04102">
    <property type="entry name" value="SlyX"/>
    <property type="match status" value="1"/>
</dbReference>
<keyword id="KW-0002">3D-structure</keyword>
<keyword id="KW-1185">Reference proteome</keyword>
<comment type="similarity">
    <text evidence="1">Belongs to the SlyX family.</text>
</comment>
<accession>Q8PAH9</accession>
<organism>
    <name type="scientific">Xanthomonas campestris pv. campestris (strain ATCC 33913 / DSM 3586 / NCPPB 528 / LMG 568 / P 25)</name>
    <dbReference type="NCBI Taxonomy" id="190485"/>
    <lineage>
        <taxon>Bacteria</taxon>
        <taxon>Pseudomonadati</taxon>
        <taxon>Pseudomonadota</taxon>
        <taxon>Gammaproteobacteria</taxon>
        <taxon>Lysobacterales</taxon>
        <taxon>Lysobacteraceae</taxon>
        <taxon>Xanthomonas</taxon>
    </lineage>
</organism>
<evidence type="ECO:0000255" key="1">
    <source>
        <dbReference type="HAMAP-Rule" id="MF_00715"/>
    </source>
</evidence>
<evidence type="ECO:0007829" key="2">
    <source>
        <dbReference type="PDB" id="3EFG"/>
    </source>
</evidence>
<proteinExistence type="evidence at protein level"/>
<name>SLYX_XANCP</name>
<reference key="1">
    <citation type="journal article" date="2002" name="Nature">
        <title>Comparison of the genomes of two Xanthomonas pathogens with differing host specificities.</title>
        <authorList>
            <person name="da Silva A.C.R."/>
            <person name="Ferro J.A."/>
            <person name="Reinach F.C."/>
            <person name="Farah C.S."/>
            <person name="Furlan L.R."/>
            <person name="Quaggio R.B."/>
            <person name="Monteiro-Vitorello C.B."/>
            <person name="Van Sluys M.A."/>
            <person name="Almeida N.F. Jr."/>
            <person name="Alves L.M.C."/>
            <person name="do Amaral A.M."/>
            <person name="Bertolini M.C."/>
            <person name="Camargo L.E.A."/>
            <person name="Camarotte G."/>
            <person name="Cannavan F."/>
            <person name="Cardozo J."/>
            <person name="Chambergo F."/>
            <person name="Ciapina L.P."/>
            <person name="Cicarelli R.M.B."/>
            <person name="Coutinho L.L."/>
            <person name="Cursino-Santos J.R."/>
            <person name="El-Dorry H."/>
            <person name="Faria J.B."/>
            <person name="Ferreira A.J.S."/>
            <person name="Ferreira R.C.C."/>
            <person name="Ferro M.I.T."/>
            <person name="Formighieri E.F."/>
            <person name="Franco M.C."/>
            <person name="Greggio C.C."/>
            <person name="Gruber A."/>
            <person name="Katsuyama A.M."/>
            <person name="Kishi L.T."/>
            <person name="Leite R.P."/>
            <person name="Lemos E.G.M."/>
            <person name="Lemos M.V.F."/>
            <person name="Locali E.C."/>
            <person name="Machado M.A."/>
            <person name="Madeira A.M.B.N."/>
            <person name="Martinez-Rossi N.M."/>
            <person name="Martins E.C."/>
            <person name="Meidanis J."/>
            <person name="Menck C.F.M."/>
            <person name="Miyaki C.Y."/>
            <person name="Moon D.H."/>
            <person name="Moreira L.M."/>
            <person name="Novo M.T.M."/>
            <person name="Okura V.K."/>
            <person name="Oliveira M.C."/>
            <person name="Oliveira V.R."/>
            <person name="Pereira H.A."/>
            <person name="Rossi A."/>
            <person name="Sena J.A.D."/>
            <person name="Silva C."/>
            <person name="de Souza R.F."/>
            <person name="Spinola L.A.F."/>
            <person name="Takita M.A."/>
            <person name="Tamura R.E."/>
            <person name="Teixeira E.C."/>
            <person name="Tezza R.I.D."/>
            <person name="Trindade dos Santos M."/>
            <person name="Truffi D."/>
            <person name="Tsai S.M."/>
            <person name="White F.F."/>
            <person name="Setubal J.C."/>
            <person name="Kitajima J.P."/>
        </authorList>
    </citation>
    <scope>NUCLEOTIDE SEQUENCE [LARGE SCALE GENOMIC DNA]</scope>
    <source>
        <strain>ATCC 33913 / DSM 3586 / NCPPB 528 / LMG 568 / P 25</strain>
    </source>
</reference>